<dbReference type="EMBL" id="CP000526">
    <property type="protein sequence ID" value="ABM50995.1"/>
    <property type="molecule type" value="Genomic_DNA"/>
</dbReference>
<dbReference type="RefSeq" id="WP_004197924.1">
    <property type="nucleotide sequence ID" value="NC_008785.1"/>
</dbReference>
<dbReference type="SMR" id="A1V876"/>
<dbReference type="GeneID" id="93061805"/>
<dbReference type="KEGG" id="bmv:BMASAVP1_A3142"/>
<dbReference type="HOGENOM" id="CLU_074407_2_0_4"/>
<dbReference type="GO" id="GO:0022625">
    <property type="term" value="C:cytosolic large ribosomal subunit"/>
    <property type="evidence" value="ECO:0007669"/>
    <property type="project" value="TreeGrafter"/>
</dbReference>
<dbReference type="GO" id="GO:0003735">
    <property type="term" value="F:structural constituent of ribosome"/>
    <property type="evidence" value="ECO:0007669"/>
    <property type="project" value="InterPro"/>
</dbReference>
<dbReference type="GO" id="GO:0006412">
    <property type="term" value="P:translation"/>
    <property type="evidence" value="ECO:0007669"/>
    <property type="project" value="UniProtKB-UniRule"/>
</dbReference>
<dbReference type="FunFam" id="3.90.1030.10:FF:000001">
    <property type="entry name" value="50S ribosomal protein L17"/>
    <property type="match status" value="1"/>
</dbReference>
<dbReference type="Gene3D" id="3.90.1030.10">
    <property type="entry name" value="Ribosomal protein L17"/>
    <property type="match status" value="1"/>
</dbReference>
<dbReference type="HAMAP" id="MF_01368">
    <property type="entry name" value="Ribosomal_bL17"/>
    <property type="match status" value="1"/>
</dbReference>
<dbReference type="InterPro" id="IPR000456">
    <property type="entry name" value="Ribosomal_bL17"/>
</dbReference>
<dbReference type="InterPro" id="IPR047859">
    <property type="entry name" value="Ribosomal_bL17_CS"/>
</dbReference>
<dbReference type="InterPro" id="IPR036373">
    <property type="entry name" value="Ribosomal_bL17_sf"/>
</dbReference>
<dbReference type="NCBIfam" id="TIGR00059">
    <property type="entry name" value="L17"/>
    <property type="match status" value="1"/>
</dbReference>
<dbReference type="PANTHER" id="PTHR14413:SF16">
    <property type="entry name" value="LARGE RIBOSOMAL SUBUNIT PROTEIN BL17M"/>
    <property type="match status" value="1"/>
</dbReference>
<dbReference type="PANTHER" id="PTHR14413">
    <property type="entry name" value="RIBOSOMAL PROTEIN L17"/>
    <property type="match status" value="1"/>
</dbReference>
<dbReference type="Pfam" id="PF01196">
    <property type="entry name" value="Ribosomal_L17"/>
    <property type="match status" value="1"/>
</dbReference>
<dbReference type="SUPFAM" id="SSF64263">
    <property type="entry name" value="Prokaryotic ribosomal protein L17"/>
    <property type="match status" value="1"/>
</dbReference>
<dbReference type="PROSITE" id="PS01167">
    <property type="entry name" value="RIBOSOMAL_L17"/>
    <property type="match status" value="1"/>
</dbReference>
<comment type="subunit">
    <text evidence="1">Part of the 50S ribosomal subunit. Contacts protein L32.</text>
</comment>
<comment type="similarity">
    <text evidence="1">Belongs to the bacterial ribosomal protein bL17 family.</text>
</comment>
<organism>
    <name type="scientific">Burkholderia mallei (strain SAVP1)</name>
    <dbReference type="NCBI Taxonomy" id="320388"/>
    <lineage>
        <taxon>Bacteria</taxon>
        <taxon>Pseudomonadati</taxon>
        <taxon>Pseudomonadota</taxon>
        <taxon>Betaproteobacteria</taxon>
        <taxon>Burkholderiales</taxon>
        <taxon>Burkholderiaceae</taxon>
        <taxon>Burkholderia</taxon>
        <taxon>pseudomallei group</taxon>
    </lineage>
</organism>
<sequence>MRHRHGLRKLNRTSSHRLAMLRNMSNSLIEHEVIKTTLPKAKELRKVVEPLITLGKKPSLANRRLAFNRLRDRDSVAKLFDVLGPRFANRPGGYLRILKFGFRVGDNAPMALVELLDRPEVEETENVQEAE</sequence>
<feature type="chain" id="PRO_1000055785" description="Large ribosomal subunit protein bL17">
    <location>
        <begin position="1"/>
        <end position="131"/>
    </location>
</feature>
<reference key="1">
    <citation type="journal article" date="2010" name="Genome Biol. Evol.">
        <title>Continuing evolution of Burkholderia mallei through genome reduction and large-scale rearrangements.</title>
        <authorList>
            <person name="Losada L."/>
            <person name="Ronning C.M."/>
            <person name="DeShazer D."/>
            <person name="Woods D."/>
            <person name="Fedorova N."/>
            <person name="Kim H.S."/>
            <person name="Shabalina S.A."/>
            <person name="Pearson T.R."/>
            <person name="Brinkac L."/>
            <person name="Tan P."/>
            <person name="Nandi T."/>
            <person name="Crabtree J."/>
            <person name="Badger J."/>
            <person name="Beckstrom-Sternberg S."/>
            <person name="Saqib M."/>
            <person name="Schutzer S.E."/>
            <person name="Keim P."/>
            <person name="Nierman W.C."/>
        </authorList>
    </citation>
    <scope>NUCLEOTIDE SEQUENCE [LARGE SCALE GENOMIC DNA]</scope>
    <source>
        <strain>SAVP1</strain>
    </source>
</reference>
<proteinExistence type="inferred from homology"/>
<name>RL17_BURMS</name>
<gene>
    <name evidence="1" type="primary">rplQ</name>
    <name type="ordered locus">BMASAVP1_A3142</name>
</gene>
<keyword id="KW-0687">Ribonucleoprotein</keyword>
<keyword id="KW-0689">Ribosomal protein</keyword>
<evidence type="ECO:0000255" key="1">
    <source>
        <dbReference type="HAMAP-Rule" id="MF_01368"/>
    </source>
</evidence>
<evidence type="ECO:0000305" key="2"/>
<accession>A1V876</accession>
<protein>
    <recommendedName>
        <fullName evidence="1">Large ribosomal subunit protein bL17</fullName>
    </recommendedName>
    <alternativeName>
        <fullName evidence="2">50S ribosomal protein L17</fullName>
    </alternativeName>
</protein>